<name>PROA_TREPS</name>
<organism>
    <name type="scientific">Treponema pallidum subsp. pallidum (strain SS14)</name>
    <dbReference type="NCBI Taxonomy" id="455434"/>
    <lineage>
        <taxon>Bacteria</taxon>
        <taxon>Pseudomonadati</taxon>
        <taxon>Spirochaetota</taxon>
        <taxon>Spirochaetia</taxon>
        <taxon>Spirochaetales</taxon>
        <taxon>Treponemataceae</taxon>
        <taxon>Treponema</taxon>
    </lineage>
</organism>
<keyword id="KW-0028">Amino-acid biosynthesis</keyword>
<keyword id="KW-0963">Cytoplasm</keyword>
<keyword id="KW-0521">NADP</keyword>
<keyword id="KW-0560">Oxidoreductase</keyword>
<keyword id="KW-0641">Proline biosynthesis</keyword>
<proteinExistence type="inferred from homology"/>
<gene>
    <name evidence="1" type="primary">proA</name>
    <name type="ordered locus">TPASS_0350</name>
</gene>
<evidence type="ECO:0000255" key="1">
    <source>
        <dbReference type="HAMAP-Rule" id="MF_00412"/>
    </source>
</evidence>
<dbReference type="EC" id="1.2.1.41" evidence="1"/>
<dbReference type="EMBL" id="CP000805">
    <property type="protein sequence ID" value="ACD70776.1"/>
    <property type="molecule type" value="Genomic_DNA"/>
</dbReference>
<dbReference type="RefSeq" id="WP_010881798.1">
    <property type="nucleotide sequence ID" value="NC_010741.1"/>
</dbReference>
<dbReference type="SMR" id="B2S2U7"/>
<dbReference type="KEGG" id="tpp:TPASS_0350"/>
<dbReference type="PATRIC" id="fig|243276.5.peg.367"/>
<dbReference type="UniPathway" id="UPA00098">
    <property type="reaction ID" value="UER00360"/>
</dbReference>
<dbReference type="Proteomes" id="UP000001202">
    <property type="component" value="Chromosome"/>
</dbReference>
<dbReference type="GO" id="GO:0005737">
    <property type="term" value="C:cytoplasm"/>
    <property type="evidence" value="ECO:0007669"/>
    <property type="project" value="UniProtKB-SubCell"/>
</dbReference>
<dbReference type="GO" id="GO:0004350">
    <property type="term" value="F:glutamate-5-semialdehyde dehydrogenase activity"/>
    <property type="evidence" value="ECO:0007669"/>
    <property type="project" value="UniProtKB-UniRule"/>
</dbReference>
<dbReference type="GO" id="GO:0050661">
    <property type="term" value="F:NADP binding"/>
    <property type="evidence" value="ECO:0007669"/>
    <property type="project" value="InterPro"/>
</dbReference>
<dbReference type="GO" id="GO:0055129">
    <property type="term" value="P:L-proline biosynthetic process"/>
    <property type="evidence" value="ECO:0007669"/>
    <property type="project" value="UniProtKB-UniRule"/>
</dbReference>
<dbReference type="CDD" id="cd07079">
    <property type="entry name" value="ALDH_F18-19_ProA-GPR"/>
    <property type="match status" value="1"/>
</dbReference>
<dbReference type="FunFam" id="3.40.309.10:FF:000006">
    <property type="entry name" value="Gamma-glutamyl phosphate reductase"/>
    <property type="match status" value="1"/>
</dbReference>
<dbReference type="Gene3D" id="3.40.605.10">
    <property type="entry name" value="Aldehyde Dehydrogenase, Chain A, domain 1"/>
    <property type="match status" value="1"/>
</dbReference>
<dbReference type="Gene3D" id="3.40.309.10">
    <property type="entry name" value="Aldehyde Dehydrogenase, Chain A, domain 2"/>
    <property type="match status" value="1"/>
</dbReference>
<dbReference type="HAMAP" id="MF_00412">
    <property type="entry name" value="ProA"/>
    <property type="match status" value="1"/>
</dbReference>
<dbReference type="InterPro" id="IPR016161">
    <property type="entry name" value="Ald_DH/histidinol_DH"/>
</dbReference>
<dbReference type="InterPro" id="IPR016163">
    <property type="entry name" value="Ald_DH_C"/>
</dbReference>
<dbReference type="InterPro" id="IPR016162">
    <property type="entry name" value="Ald_DH_N"/>
</dbReference>
<dbReference type="InterPro" id="IPR015590">
    <property type="entry name" value="Aldehyde_DH_dom"/>
</dbReference>
<dbReference type="InterPro" id="IPR020593">
    <property type="entry name" value="G-glutamylP_reductase_CS"/>
</dbReference>
<dbReference type="InterPro" id="IPR012134">
    <property type="entry name" value="Glu-5-SA_DH"/>
</dbReference>
<dbReference type="InterPro" id="IPR000965">
    <property type="entry name" value="GPR_dom"/>
</dbReference>
<dbReference type="NCBIfam" id="NF001221">
    <property type="entry name" value="PRK00197.1"/>
    <property type="match status" value="1"/>
</dbReference>
<dbReference type="NCBIfam" id="TIGR00407">
    <property type="entry name" value="proA"/>
    <property type="match status" value="1"/>
</dbReference>
<dbReference type="PANTHER" id="PTHR11063:SF8">
    <property type="entry name" value="DELTA-1-PYRROLINE-5-CARBOXYLATE SYNTHASE"/>
    <property type="match status" value="1"/>
</dbReference>
<dbReference type="PANTHER" id="PTHR11063">
    <property type="entry name" value="GLUTAMATE SEMIALDEHYDE DEHYDROGENASE"/>
    <property type="match status" value="1"/>
</dbReference>
<dbReference type="Pfam" id="PF00171">
    <property type="entry name" value="Aldedh"/>
    <property type="match status" value="1"/>
</dbReference>
<dbReference type="PIRSF" id="PIRSF000151">
    <property type="entry name" value="GPR"/>
    <property type="match status" value="1"/>
</dbReference>
<dbReference type="SUPFAM" id="SSF53720">
    <property type="entry name" value="ALDH-like"/>
    <property type="match status" value="1"/>
</dbReference>
<dbReference type="PROSITE" id="PS01223">
    <property type="entry name" value="PROA"/>
    <property type="match status" value="1"/>
</dbReference>
<comment type="function">
    <text evidence="1">Catalyzes the NADPH-dependent reduction of L-glutamate 5-phosphate into L-glutamate 5-semialdehyde and phosphate. The product spontaneously undergoes cyclization to form 1-pyrroline-5-carboxylate.</text>
</comment>
<comment type="catalytic activity">
    <reaction evidence="1">
        <text>L-glutamate 5-semialdehyde + phosphate + NADP(+) = L-glutamyl 5-phosphate + NADPH + H(+)</text>
        <dbReference type="Rhea" id="RHEA:19541"/>
        <dbReference type="ChEBI" id="CHEBI:15378"/>
        <dbReference type="ChEBI" id="CHEBI:43474"/>
        <dbReference type="ChEBI" id="CHEBI:57783"/>
        <dbReference type="ChEBI" id="CHEBI:58066"/>
        <dbReference type="ChEBI" id="CHEBI:58274"/>
        <dbReference type="ChEBI" id="CHEBI:58349"/>
        <dbReference type="EC" id="1.2.1.41"/>
    </reaction>
</comment>
<comment type="pathway">
    <text evidence="1">Amino-acid biosynthesis; L-proline biosynthesis; L-glutamate 5-semialdehyde from L-glutamate: step 2/2.</text>
</comment>
<comment type="subcellular location">
    <subcellularLocation>
        <location evidence="1">Cytoplasm</location>
    </subcellularLocation>
</comment>
<comment type="similarity">
    <text evidence="1">Belongs to the gamma-glutamyl phosphate reductase family.</text>
</comment>
<feature type="chain" id="PRO_1000193672" description="Gamma-glutamyl phosphate reductase">
    <location>
        <begin position="1"/>
        <end position="428"/>
    </location>
</feature>
<reference key="1">
    <citation type="journal article" date="2008" name="BMC Microbiol.">
        <title>Complete genome sequence of Treponema pallidum ssp. pallidum strain SS14 determined with oligonucleotide arrays.</title>
        <authorList>
            <person name="Matejkova P."/>
            <person name="Strouhal M."/>
            <person name="Smajs D."/>
            <person name="Norris S.J."/>
            <person name="Palzkill T."/>
            <person name="Petrosino J.F."/>
            <person name="Sodergren E."/>
            <person name="Norton J.E."/>
            <person name="Singh J."/>
            <person name="Richmond T.A."/>
            <person name="Molla M.N."/>
            <person name="Albert T.J."/>
            <person name="Weinstock G.M."/>
        </authorList>
    </citation>
    <scope>NUCLEOTIDE SEQUENCE [LARGE SCALE GENOMIC DNA]</scope>
    <source>
        <strain>SS14</strain>
    </source>
</reference>
<accession>B2S2U7</accession>
<sequence>MVEVYARLRAAVARLAVCSAAEKDGALRAVRDALHAQREDILRANAQDLARAREAGLAAPLVARLALSEHLLEDMLRSLTVLSLQRDPIGEIIEGYTLANGLEIRKVRVPLGVVAVIYESRPNVTVDAFALAYKSGNAVLLRAGSAASYSNAPLLRAIHVGLKKAHGVVDAVAVPPVLEEKYGDVDHILRARGFIDAVFPRGGAALIRRVVEGAHVPVIETGCGVCHLYVDESANIDVALQIAENAKLQKPAACNSVETLLVHRAVARPFLHRVQEIFATCEETTRKPGGVDFFCDAESFSLLTERGARKNVFHAQAETWDREYLDYQVSVRVVPNLEEALRHIARHSTKHSEVIVTRDRARARRFHQEVDAACVYVNASSRFTDGGQFGMGAEIGVSTQKLHARGPMGLCALTTSKYLIDGEGQVRP</sequence>
<protein>
    <recommendedName>
        <fullName evidence="1">Gamma-glutamyl phosphate reductase</fullName>
        <shortName evidence="1">GPR</shortName>
        <ecNumber evidence="1">1.2.1.41</ecNumber>
    </recommendedName>
    <alternativeName>
        <fullName evidence="1">Glutamate-5-semialdehyde dehydrogenase</fullName>
    </alternativeName>
    <alternativeName>
        <fullName evidence="1">Glutamyl-gamma-semialdehyde dehydrogenase</fullName>
        <shortName evidence="1">GSA dehydrogenase</shortName>
    </alternativeName>
</protein>